<reference key="1">
    <citation type="journal article" date="2006" name="Mol. Biol. Evol.">
        <title>The chloroplast genome of Phalaenopsis aphrodite (Orchidaceae): comparative analysis of evolutionary rate with that of grasses and its phylogenetic implications.</title>
        <authorList>
            <person name="Chang C.-C."/>
            <person name="Lin H.-C."/>
            <person name="Lin I.-P."/>
            <person name="Chow T.-Y."/>
            <person name="Chen H.-H."/>
            <person name="Chen W.-H."/>
            <person name="Cheng C.-H."/>
            <person name="Lin C.-Y."/>
            <person name="Liu S.-M."/>
            <person name="Chang C.-C."/>
            <person name="Chaw S.-M."/>
        </authorList>
    </citation>
    <scope>NUCLEOTIDE SEQUENCE [LARGE SCALE GENOMIC DNA]</scope>
    <source>
        <strain>cv. Taisugar TS-97</strain>
    </source>
</reference>
<protein>
    <recommendedName>
        <fullName evidence="1">Large ribosomal subunit protein bL20c</fullName>
    </recommendedName>
    <alternativeName>
        <fullName evidence="2">50S ribosomal protein L20, chloroplastic</fullName>
    </alternativeName>
</protein>
<proteinExistence type="inferred from homology"/>
<comment type="function">
    <text evidence="1">Binds directly to 23S ribosomal RNA and is necessary for the in vitro assembly process of the 50S ribosomal subunit. It is not involved in the protein synthesizing functions of that subunit.</text>
</comment>
<comment type="subcellular location">
    <subcellularLocation>
        <location>Plastid</location>
        <location>Chloroplast</location>
    </subcellularLocation>
</comment>
<comment type="similarity">
    <text evidence="1">Belongs to the bacterial ribosomal protein bL20 family.</text>
</comment>
<keyword id="KW-0150">Chloroplast</keyword>
<keyword id="KW-0934">Plastid</keyword>
<keyword id="KW-0687">Ribonucleoprotein</keyword>
<keyword id="KW-0689">Ribosomal protein</keyword>
<keyword id="KW-0694">RNA-binding</keyword>
<keyword id="KW-0699">rRNA-binding</keyword>
<dbReference type="EMBL" id="AY916449">
    <property type="protein sequence ID" value="AAW82523.1"/>
    <property type="molecule type" value="Genomic_DNA"/>
</dbReference>
<dbReference type="RefSeq" id="YP_358602.1">
    <property type="nucleotide sequence ID" value="NC_007499.1"/>
</dbReference>
<dbReference type="SMR" id="Q3BAL6"/>
<dbReference type="GeneID" id="3741704"/>
<dbReference type="GO" id="GO:0009507">
    <property type="term" value="C:chloroplast"/>
    <property type="evidence" value="ECO:0007669"/>
    <property type="project" value="UniProtKB-SubCell"/>
</dbReference>
<dbReference type="GO" id="GO:1990904">
    <property type="term" value="C:ribonucleoprotein complex"/>
    <property type="evidence" value="ECO:0007669"/>
    <property type="project" value="UniProtKB-KW"/>
</dbReference>
<dbReference type="GO" id="GO:0005840">
    <property type="term" value="C:ribosome"/>
    <property type="evidence" value="ECO:0007669"/>
    <property type="project" value="UniProtKB-KW"/>
</dbReference>
<dbReference type="GO" id="GO:0019843">
    <property type="term" value="F:rRNA binding"/>
    <property type="evidence" value="ECO:0007669"/>
    <property type="project" value="UniProtKB-UniRule"/>
</dbReference>
<dbReference type="GO" id="GO:0003735">
    <property type="term" value="F:structural constituent of ribosome"/>
    <property type="evidence" value="ECO:0007669"/>
    <property type="project" value="InterPro"/>
</dbReference>
<dbReference type="GO" id="GO:0000027">
    <property type="term" value="P:ribosomal large subunit assembly"/>
    <property type="evidence" value="ECO:0007669"/>
    <property type="project" value="UniProtKB-UniRule"/>
</dbReference>
<dbReference type="GO" id="GO:0006412">
    <property type="term" value="P:translation"/>
    <property type="evidence" value="ECO:0007669"/>
    <property type="project" value="InterPro"/>
</dbReference>
<dbReference type="CDD" id="cd07026">
    <property type="entry name" value="Ribosomal_L20"/>
    <property type="match status" value="1"/>
</dbReference>
<dbReference type="FunFam" id="1.10.1900.20:FF:000001">
    <property type="entry name" value="50S ribosomal protein L20"/>
    <property type="match status" value="1"/>
</dbReference>
<dbReference type="Gene3D" id="6.10.160.10">
    <property type="match status" value="1"/>
</dbReference>
<dbReference type="Gene3D" id="1.10.1900.20">
    <property type="entry name" value="Ribosomal protein L20"/>
    <property type="match status" value="1"/>
</dbReference>
<dbReference type="HAMAP" id="MF_00382">
    <property type="entry name" value="Ribosomal_bL20"/>
    <property type="match status" value="1"/>
</dbReference>
<dbReference type="InterPro" id="IPR005813">
    <property type="entry name" value="Ribosomal_bL20"/>
</dbReference>
<dbReference type="InterPro" id="IPR049946">
    <property type="entry name" value="RIBOSOMAL_L20_CS"/>
</dbReference>
<dbReference type="InterPro" id="IPR035566">
    <property type="entry name" value="Ribosomal_protein_bL20_C"/>
</dbReference>
<dbReference type="NCBIfam" id="TIGR01032">
    <property type="entry name" value="rplT_bact"/>
    <property type="match status" value="1"/>
</dbReference>
<dbReference type="PANTHER" id="PTHR10986">
    <property type="entry name" value="39S RIBOSOMAL PROTEIN L20"/>
    <property type="match status" value="1"/>
</dbReference>
<dbReference type="Pfam" id="PF00453">
    <property type="entry name" value="Ribosomal_L20"/>
    <property type="match status" value="1"/>
</dbReference>
<dbReference type="PRINTS" id="PR00062">
    <property type="entry name" value="RIBOSOMALL20"/>
</dbReference>
<dbReference type="SUPFAM" id="SSF74731">
    <property type="entry name" value="Ribosomal protein L20"/>
    <property type="match status" value="1"/>
</dbReference>
<dbReference type="PROSITE" id="PS00937">
    <property type="entry name" value="RIBOSOMAL_L20"/>
    <property type="match status" value="1"/>
</dbReference>
<accession>Q3BAL6</accession>
<name>RK20_PHAAO</name>
<organism>
    <name type="scientific">Phalaenopsis aphrodite subsp. formosana</name>
    <name type="common">Moth orchid</name>
    <dbReference type="NCBI Taxonomy" id="308872"/>
    <lineage>
        <taxon>Eukaryota</taxon>
        <taxon>Viridiplantae</taxon>
        <taxon>Streptophyta</taxon>
        <taxon>Embryophyta</taxon>
        <taxon>Tracheophyta</taxon>
        <taxon>Spermatophyta</taxon>
        <taxon>Magnoliopsida</taxon>
        <taxon>Liliopsida</taxon>
        <taxon>Asparagales</taxon>
        <taxon>Orchidaceae</taxon>
        <taxon>Epidendroideae</taxon>
        <taxon>Vandeae</taxon>
        <taxon>Aeridinae</taxon>
        <taxon>Phalaenopsis</taxon>
    </lineage>
</organism>
<sequence length="117" mass="14227">MTRVKRGYTARRRRKKIRLFASTFIGAHSRLTRTTTQQRMRALISSHRDRSRKKRDFRRLWITRINAVTREDRLFYSYSLFIHNLYKRQLLLNRKILAQIALSNKNCFDIISNKIIN</sequence>
<gene>
    <name evidence="1" type="primary">rpl20</name>
</gene>
<feature type="chain" id="PRO_0000276421" description="Large ribosomal subunit protein bL20c">
    <location>
        <begin position="1"/>
        <end position="117"/>
    </location>
</feature>
<evidence type="ECO:0000255" key="1">
    <source>
        <dbReference type="HAMAP-Rule" id="MF_00382"/>
    </source>
</evidence>
<evidence type="ECO:0000305" key="2"/>
<geneLocation type="chloroplast"/>